<accession>Q5HQE9</accession>
<comment type="similarity">
    <text evidence="1">Belongs to the 2H phosphoesterase superfamily. YjcG family.</text>
</comment>
<gene>
    <name type="ordered locus">SERP0604</name>
</gene>
<dbReference type="EC" id="3.1.-.-" evidence="1"/>
<dbReference type="EMBL" id="CP000029">
    <property type="protein sequence ID" value="AAW54030.1"/>
    <property type="molecule type" value="Genomic_DNA"/>
</dbReference>
<dbReference type="RefSeq" id="WP_001829296.1">
    <property type="nucleotide sequence ID" value="NC_002976.3"/>
</dbReference>
<dbReference type="SMR" id="Q5HQE9"/>
<dbReference type="STRING" id="176279.SERP0604"/>
<dbReference type="KEGG" id="ser:SERP0604"/>
<dbReference type="eggNOG" id="COG1514">
    <property type="taxonomic scope" value="Bacteria"/>
</dbReference>
<dbReference type="HOGENOM" id="CLU_132020_0_0_9"/>
<dbReference type="Proteomes" id="UP000000531">
    <property type="component" value="Chromosome"/>
</dbReference>
<dbReference type="GO" id="GO:0016788">
    <property type="term" value="F:hydrolase activity, acting on ester bonds"/>
    <property type="evidence" value="ECO:0007669"/>
    <property type="project" value="UniProtKB-UniRule"/>
</dbReference>
<dbReference type="Gene3D" id="3.90.1140.10">
    <property type="entry name" value="Cyclic phosphodiesterase"/>
    <property type="match status" value="1"/>
</dbReference>
<dbReference type="HAMAP" id="MF_01444">
    <property type="entry name" value="2H_phosphoesterase_YjcG"/>
    <property type="match status" value="1"/>
</dbReference>
<dbReference type="InterPro" id="IPR050580">
    <property type="entry name" value="2H_phosphoesterase_YjcG-like"/>
</dbReference>
<dbReference type="InterPro" id="IPR009097">
    <property type="entry name" value="Cyclic_Pdiesterase"/>
</dbReference>
<dbReference type="InterPro" id="IPR022932">
    <property type="entry name" value="YjcG"/>
</dbReference>
<dbReference type="NCBIfam" id="NF010223">
    <property type="entry name" value="PRK13679.1"/>
    <property type="match status" value="1"/>
</dbReference>
<dbReference type="PANTHER" id="PTHR40037:SF1">
    <property type="entry name" value="PHOSPHOESTERASE SAOUHSC_00951-RELATED"/>
    <property type="match status" value="1"/>
</dbReference>
<dbReference type="PANTHER" id="PTHR40037">
    <property type="entry name" value="PHOSPHOESTERASE YJCG-RELATED"/>
    <property type="match status" value="1"/>
</dbReference>
<dbReference type="Pfam" id="PF13563">
    <property type="entry name" value="2_5_RNA_ligase2"/>
    <property type="match status" value="1"/>
</dbReference>
<dbReference type="SUPFAM" id="SSF55144">
    <property type="entry name" value="LigT-like"/>
    <property type="match status" value="1"/>
</dbReference>
<reference key="1">
    <citation type="journal article" date="2005" name="J. Bacteriol.">
        <title>Insights on evolution of virulence and resistance from the complete genome analysis of an early methicillin-resistant Staphylococcus aureus strain and a biofilm-producing methicillin-resistant Staphylococcus epidermidis strain.</title>
        <authorList>
            <person name="Gill S.R."/>
            <person name="Fouts D.E."/>
            <person name="Archer G.L."/>
            <person name="Mongodin E.F."/>
            <person name="DeBoy R.T."/>
            <person name="Ravel J."/>
            <person name="Paulsen I.T."/>
            <person name="Kolonay J.F."/>
            <person name="Brinkac L.M."/>
            <person name="Beanan M.J."/>
            <person name="Dodson R.J."/>
            <person name="Daugherty S.C."/>
            <person name="Madupu R."/>
            <person name="Angiuoli S.V."/>
            <person name="Durkin A.S."/>
            <person name="Haft D.H."/>
            <person name="Vamathevan J.J."/>
            <person name="Khouri H."/>
            <person name="Utterback T.R."/>
            <person name="Lee C."/>
            <person name="Dimitrov G."/>
            <person name="Jiang L."/>
            <person name="Qin H."/>
            <person name="Weidman J."/>
            <person name="Tran K."/>
            <person name="Kang K.H."/>
            <person name="Hance I.R."/>
            <person name="Nelson K.E."/>
            <person name="Fraser C.M."/>
        </authorList>
    </citation>
    <scope>NUCLEOTIDE SEQUENCE [LARGE SCALE GENOMIC DNA]</scope>
    <source>
        <strain>ATCC 35984 / DSM 28319 / BCRC 17069 / CCUG 31568 / BM 3577 / RP62A</strain>
    </source>
</reference>
<sequence length="169" mass="19541">MILGLALVPSKSFQDEVNAYRKRYDNHYAQIMPHITIKPQFEIDDHDFNLIKNEVKNRISSIKPVEVHATKASNFAPISNVIYFKVAKTESLDQLFNQFNTEDFYGTAEHPFVPHFTIAQGLTSQEFEDIYGQVKLAGVDHREIIEELSLLQYSEEEDKWTIIETFTLG</sequence>
<keyword id="KW-0378">Hydrolase</keyword>
<keyword id="KW-1185">Reference proteome</keyword>
<evidence type="ECO:0000255" key="1">
    <source>
        <dbReference type="HAMAP-Rule" id="MF_01444"/>
    </source>
</evidence>
<protein>
    <recommendedName>
        <fullName evidence="1">Putative phosphoesterase SERP0604</fullName>
        <ecNumber evidence="1">3.1.-.-</ecNumber>
    </recommendedName>
</protein>
<proteinExistence type="inferred from homology"/>
<organism>
    <name type="scientific">Staphylococcus epidermidis (strain ATCC 35984 / DSM 28319 / BCRC 17069 / CCUG 31568 / BM 3577 / RP62A)</name>
    <dbReference type="NCBI Taxonomy" id="176279"/>
    <lineage>
        <taxon>Bacteria</taxon>
        <taxon>Bacillati</taxon>
        <taxon>Bacillota</taxon>
        <taxon>Bacilli</taxon>
        <taxon>Bacillales</taxon>
        <taxon>Staphylococcaceae</taxon>
        <taxon>Staphylococcus</taxon>
    </lineage>
</organism>
<feature type="chain" id="PRO_0000299347" description="Putative phosphoesterase SERP0604">
    <location>
        <begin position="1"/>
        <end position="169"/>
    </location>
</feature>
<feature type="short sequence motif" description="HXTX 1" evidence="1">
    <location>
        <begin position="34"/>
        <end position="37"/>
    </location>
</feature>
<feature type="short sequence motif" description="HXTX 2" evidence="1">
    <location>
        <begin position="115"/>
        <end position="118"/>
    </location>
</feature>
<feature type="active site" description="Proton donor" evidence="1">
    <location>
        <position position="34"/>
    </location>
</feature>
<feature type="active site" description="Proton acceptor" evidence="1">
    <location>
        <position position="115"/>
    </location>
</feature>
<name>Y604_STAEQ</name>